<proteinExistence type="inferred from homology"/>
<feature type="signal peptide" evidence="1">
    <location>
        <begin position="1"/>
        <end position="22"/>
    </location>
</feature>
<feature type="chain" id="PRO_0000034689" description="Tol-Pal system protein TolB" evidence="1">
    <location>
        <begin position="23"/>
        <end position="450"/>
    </location>
</feature>
<dbReference type="EMBL" id="AE003852">
    <property type="protein sequence ID" value="AAF94984.1"/>
    <property type="molecule type" value="Genomic_DNA"/>
</dbReference>
<dbReference type="PIR" id="H82151">
    <property type="entry name" value="H82151"/>
</dbReference>
<dbReference type="RefSeq" id="NP_231470.1">
    <property type="nucleotide sequence ID" value="NC_002505.1"/>
</dbReference>
<dbReference type="SMR" id="Q9KR11"/>
<dbReference type="STRING" id="243277.VC_1836"/>
<dbReference type="DNASU" id="2613590"/>
<dbReference type="EnsemblBacteria" id="AAF94984">
    <property type="protein sequence ID" value="AAF94984"/>
    <property type="gene ID" value="VC_1836"/>
</dbReference>
<dbReference type="KEGG" id="vch:VC_1836"/>
<dbReference type="PATRIC" id="fig|243277.26.peg.1752"/>
<dbReference type="eggNOG" id="COG0823">
    <property type="taxonomic scope" value="Bacteria"/>
</dbReference>
<dbReference type="HOGENOM" id="CLU_047123_0_0_6"/>
<dbReference type="Proteomes" id="UP000000584">
    <property type="component" value="Chromosome 1"/>
</dbReference>
<dbReference type="GO" id="GO:0042597">
    <property type="term" value="C:periplasmic space"/>
    <property type="evidence" value="ECO:0007669"/>
    <property type="project" value="UniProtKB-SubCell"/>
</dbReference>
<dbReference type="GO" id="GO:0051301">
    <property type="term" value="P:cell division"/>
    <property type="evidence" value="ECO:0007669"/>
    <property type="project" value="UniProtKB-UniRule"/>
</dbReference>
<dbReference type="GO" id="GO:0017038">
    <property type="term" value="P:protein import"/>
    <property type="evidence" value="ECO:0007669"/>
    <property type="project" value="InterPro"/>
</dbReference>
<dbReference type="Gene3D" id="2.120.10.30">
    <property type="entry name" value="TolB, C-terminal domain"/>
    <property type="match status" value="1"/>
</dbReference>
<dbReference type="Gene3D" id="3.40.50.10070">
    <property type="entry name" value="TolB, N-terminal domain"/>
    <property type="match status" value="1"/>
</dbReference>
<dbReference type="HAMAP" id="MF_00671">
    <property type="entry name" value="TolB"/>
    <property type="match status" value="1"/>
</dbReference>
<dbReference type="InterPro" id="IPR011042">
    <property type="entry name" value="6-blade_b-propeller_TolB-like"/>
</dbReference>
<dbReference type="InterPro" id="IPR011659">
    <property type="entry name" value="PD40"/>
</dbReference>
<dbReference type="InterPro" id="IPR014167">
    <property type="entry name" value="Tol-Pal_TolB"/>
</dbReference>
<dbReference type="InterPro" id="IPR007195">
    <property type="entry name" value="TolB_N"/>
</dbReference>
<dbReference type="NCBIfam" id="TIGR02800">
    <property type="entry name" value="propeller_TolB"/>
    <property type="match status" value="1"/>
</dbReference>
<dbReference type="PANTHER" id="PTHR36842:SF1">
    <property type="entry name" value="PROTEIN TOLB"/>
    <property type="match status" value="1"/>
</dbReference>
<dbReference type="PANTHER" id="PTHR36842">
    <property type="entry name" value="PROTEIN TOLB HOMOLOG"/>
    <property type="match status" value="1"/>
</dbReference>
<dbReference type="Pfam" id="PF07676">
    <property type="entry name" value="PD40"/>
    <property type="match status" value="3"/>
</dbReference>
<dbReference type="Pfam" id="PF04052">
    <property type="entry name" value="TolB_N"/>
    <property type="match status" value="1"/>
</dbReference>
<dbReference type="SUPFAM" id="SSF52964">
    <property type="entry name" value="TolB, N-terminal domain"/>
    <property type="match status" value="1"/>
</dbReference>
<dbReference type="SUPFAM" id="SSF69304">
    <property type="entry name" value="Tricorn protease N-terminal domain"/>
    <property type="match status" value="1"/>
</dbReference>
<protein>
    <recommendedName>
        <fullName evidence="1">Tol-Pal system protein TolB</fullName>
    </recommendedName>
</protein>
<organism>
    <name type="scientific">Vibrio cholerae serotype O1 (strain ATCC 39315 / El Tor Inaba N16961)</name>
    <dbReference type="NCBI Taxonomy" id="243277"/>
    <lineage>
        <taxon>Bacteria</taxon>
        <taxon>Pseudomonadati</taxon>
        <taxon>Pseudomonadota</taxon>
        <taxon>Gammaproteobacteria</taxon>
        <taxon>Vibrionales</taxon>
        <taxon>Vibrionaceae</taxon>
        <taxon>Vibrio</taxon>
    </lineage>
</organism>
<name>TOLB_VIBCH</name>
<sequence length="450" mass="49645">MFKRLVFVLMLIGTGFSNIANAALELVITDGIDSARPIAIVPFKWEGATKLPEDVSAVIASDLQRSGKFSPVPTSKMPQTPYSEEQVNFGKWTSMGVDSLLTGTITQNAEGSYVISYQLVDIVRGQLTQGQSKALSQDGQLVLSKDHVLFNKVATVPASRMREYAHRIADLVYEELTGERGAFLTRIAYVVVNDKDPYPYQLRIADYDGYNERLVLRSKQPLMSPAWSPDGQTLAYVSFQNGQAEIYMMNIYSGKREKLTSFPRHNGAPRFSPDGKTLALVLSKTGNLQVYTMDLATRRLTEVTSGRSNNTEPFWHPDGKSLIFTSDRGGKPQIYQVNLSGGETKRLTWQGSQNLGGQITPDGKFLVMVNRSDSGFNLAKQDLETGAMQILTKTLLDESPSIAPNGGMVIYSSIYNKANVLSMVSIDGRFKARLPATNGRVRAPAWSPFL</sequence>
<comment type="function">
    <text evidence="1">Part of the Tol-Pal system, which plays a role in outer membrane invagination during cell division and is important for maintaining outer membrane integrity.</text>
</comment>
<comment type="subunit">
    <text evidence="1">The Tol-Pal system is composed of five core proteins: the inner membrane proteins TolA, TolQ and TolR, the periplasmic protein TolB and the outer membrane protein Pal. They form a network linking the inner and outer membranes and the peptidoglycan layer.</text>
</comment>
<comment type="subcellular location">
    <subcellularLocation>
        <location evidence="1">Periplasm</location>
    </subcellularLocation>
</comment>
<comment type="similarity">
    <text evidence="1">Belongs to the TolB family.</text>
</comment>
<gene>
    <name evidence="1" type="primary">tolB</name>
    <name type="ordered locus">VC_1836</name>
</gene>
<keyword id="KW-0131">Cell cycle</keyword>
<keyword id="KW-0132">Cell division</keyword>
<keyword id="KW-0574">Periplasm</keyword>
<keyword id="KW-1185">Reference proteome</keyword>
<keyword id="KW-0732">Signal</keyword>
<reference key="1">
    <citation type="journal article" date="2000" name="Nature">
        <title>DNA sequence of both chromosomes of the cholera pathogen Vibrio cholerae.</title>
        <authorList>
            <person name="Heidelberg J.F."/>
            <person name="Eisen J.A."/>
            <person name="Nelson W.C."/>
            <person name="Clayton R.A."/>
            <person name="Gwinn M.L."/>
            <person name="Dodson R.J."/>
            <person name="Haft D.H."/>
            <person name="Hickey E.K."/>
            <person name="Peterson J.D."/>
            <person name="Umayam L.A."/>
            <person name="Gill S.R."/>
            <person name="Nelson K.E."/>
            <person name="Read T.D."/>
            <person name="Tettelin H."/>
            <person name="Richardson D.L."/>
            <person name="Ermolaeva M.D."/>
            <person name="Vamathevan J.J."/>
            <person name="Bass S."/>
            <person name="Qin H."/>
            <person name="Dragoi I."/>
            <person name="Sellers P."/>
            <person name="McDonald L.A."/>
            <person name="Utterback T.R."/>
            <person name="Fleischmann R.D."/>
            <person name="Nierman W.C."/>
            <person name="White O."/>
            <person name="Salzberg S.L."/>
            <person name="Smith H.O."/>
            <person name="Colwell R.R."/>
            <person name="Mekalanos J.J."/>
            <person name="Venter J.C."/>
            <person name="Fraser C.M."/>
        </authorList>
    </citation>
    <scope>NUCLEOTIDE SEQUENCE [LARGE SCALE GENOMIC DNA]</scope>
    <source>
        <strain>ATCC 39315 / El Tor Inaba N16961</strain>
    </source>
</reference>
<evidence type="ECO:0000255" key="1">
    <source>
        <dbReference type="HAMAP-Rule" id="MF_00671"/>
    </source>
</evidence>
<accession>Q9KR11</accession>